<comment type="function">
    <text evidence="1">Catalyzes the conversion of dihydroorotate to orotate with quinone as electron acceptor.</text>
</comment>
<comment type="catalytic activity">
    <reaction evidence="1">
        <text>(S)-dihydroorotate + a quinone = orotate + a quinol</text>
        <dbReference type="Rhea" id="RHEA:30187"/>
        <dbReference type="ChEBI" id="CHEBI:24646"/>
        <dbReference type="ChEBI" id="CHEBI:30839"/>
        <dbReference type="ChEBI" id="CHEBI:30864"/>
        <dbReference type="ChEBI" id="CHEBI:132124"/>
        <dbReference type="EC" id="1.3.5.2"/>
    </reaction>
</comment>
<comment type="cofactor">
    <cofactor evidence="1">
        <name>FMN</name>
        <dbReference type="ChEBI" id="CHEBI:58210"/>
    </cofactor>
    <text evidence="1">Binds 1 FMN per subunit.</text>
</comment>
<comment type="pathway">
    <text evidence="1">Pyrimidine metabolism; UMP biosynthesis via de novo pathway; orotate from (S)-dihydroorotate (quinone route): step 1/1.</text>
</comment>
<comment type="subunit">
    <text evidence="1">Monomer.</text>
</comment>
<comment type="subcellular location">
    <subcellularLocation>
        <location evidence="1">Cell membrane</location>
        <topology evidence="1">Peripheral membrane protein</topology>
    </subcellularLocation>
</comment>
<comment type="similarity">
    <text evidence="1">Belongs to the dihydroorotate dehydrogenase family. Type 2 subfamily.</text>
</comment>
<reference key="1">
    <citation type="journal article" date="2000" name="Nature">
        <title>Complete genome sequence of Pseudomonas aeruginosa PAO1, an opportunistic pathogen.</title>
        <authorList>
            <person name="Stover C.K."/>
            <person name="Pham X.-Q.T."/>
            <person name="Erwin A.L."/>
            <person name="Mizoguchi S.D."/>
            <person name="Warrener P."/>
            <person name="Hickey M.J."/>
            <person name="Brinkman F.S.L."/>
            <person name="Hufnagle W.O."/>
            <person name="Kowalik D.J."/>
            <person name="Lagrou M."/>
            <person name="Garber R.L."/>
            <person name="Goltry L."/>
            <person name="Tolentino E."/>
            <person name="Westbrock-Wadman S."/>
            <person name="Yuan Y."/>
            <person name="Brody L.L."/>
            <person name="Coulter S.N."/>
            <person name="Folger K.R."/>
            <person name="Kas A."/>
            <person name="Larbig K."/>
            <person name="Lim R.M."/>
            <person name="Smith K.A."/>
            <person name="Spencer D.H."/>
            <person name="Wong G.K.-S."/>
            <person name="Wu Z."/>
            <person name="Paulsen I.T."/>
            <person name="Reizer J."/>
            <person name="Saier M.H. Jr."/>
            <person name="Hancock R.E.W."/>
            <person name="Lory S."/>
            <person name="Olson M.V."/>
        </authorList>
    </citation>
    <scope>NUCLEOTIDE SEQUENCE [LARGE SCALE GENOMIC DNA]</scope>
    <source>
        <strain>ATCC 15692 / DSM 22644 / CIP 104116 / JCM 14847 / LMG 12228 / 1C / PRS 101 / PAO1</strain>
    </source>
</reference>
<accession>Q9HZF8</accession>
<feature type="chain" id="PRO_0000148467" description="Dihydroorotate dehydrogenase (quinone)">
    <location>
        <begin position="1"/>
        <end position="342"/>
    </location>
</feature>
<feature type="active site" description="Nucleophile" evidence="1">
    <location>
        <position position="174"/>
    </location>
</feature>
<feature type="binding site" evidence="1">
    <location>
        <begin position="61"/>
        <end position="65"/>
    </location>
    <ligand>
        <name>FMN</name>
        <dbReference type="ChEBI" id="CHEBI:58210"/>
    </ligand>
</feature>
<feature type="binding site" evidence="1">
    <location>
        <position position="65"/>
    </location>
    <ligand>
        <name>substrate</name>
    </ligand>
</feature>
<feature type="binding site" evidence="1">
    <location>
        <position position="85"/>
    </location>
    <ligand>
        <name>FMN</name>
        <dbReference type="ChEBI" id="CHEBI:58210"/>
    </ligand>
</feature>
<feature type="binding site" evidence="1">
    <location>
        <begin position="110"/>
        <end position="114"/>
    </location>
    <ligand>
        <name>substrate</name>
    </ligand>
</feature>
<feature type="binding site" evidence="1">
    <location>
        <position position="138"/>
    </location>
    <ligand>
        <name>FMN</name>
        <dbReference type="ChEBI" id="CHEBI:58210"/>
    </ligand>
</feature>
<feature type="binding site" evidence="1">
    <location>
        <position position="171"/>
    </location>
    <ligand>
        <name>FMN</name>
        <dbReference type="ChEBI" id="CHEBI:58210"/>
    </ligand>
</feature>
<feature type="binding site" evidence="1">
    <location>
        <position position="171"/>
    </location>
    <ligand>
        <name>substrate</name>
    </ligand>
</feature>
<feature type="binding site" evidence="1">
    <location>
        <position position="176"/>
    </location>
    <ligand>
        <name>substrate</name>
    </ligand>
</feature>
<feature type="binding site" evidence="1">
    <location>
        <position position="216"/>
    </location>
    <ligand>
        <name>FMN</name>
        <dbReference type="ChEBI" id="CHEBI:58210"/>
    </ligand>
</feature>
<feature type="binding site" evidence="1">
    <location>
        <position position="244"/>
    </location>
    <ligand>
        <name>FMN</name>
        <dbReference type="ChEBI" id="CHEBI:58210"/>
    </ligand>
</feature>
<feature type="binding site" evidence="1">
    <location>
        <begin position="245"/>
        <end position="246"/>
    </location>
    <ligand>
        <name>substrate</name>
    </ligand>
</feature>
<feature type="binding site" evidence="1">
    <location>
        <position position="267"/>
    </location>
    <ligand>
        <name>FMN</name>
        <dbReference type="ChEBI" id="CHEBI:58210"/>
    </ligand>
</feature>
<feature type="binding site" evidence="1">
    <location>
        <position position="296"/>
    </location>
    <ligand>
        <name>FMN</name>
        <dbReference type="ChEBI" id="CHEBI:58210"/>
    </ligand>
</feature>
<feature type="binding site" evidence="1">
    <location>
        <begin position="317"/>
        <end position="318"/>
    </location>
    <ligand>
        <name>FMN</name>
        <dbReference type="ChEBI" id="CHEBI:58210"/>
    </ligand>
</feature>
<evidence type="ECO:0000255" key="1">
    <source>
        <dbReference type="HAMAP-Rule" id="MF_00225"/>
    </source>
</evidence>
<gene>
    <name evidence="1" type="primary">pyrD</name>
    <name type="ordered locus">PA3050</name>
</gene>
<name>PYRD_PSEAE</name>
<dbReference type="EC" id="1.3.5.2" evidence="1"/>
<dbReference type="EMBL" id="AE004091">
    <property type="protein sequence ID" value="AAG06438.1"/>
    <property type="molecule type" value="Genomic_DNA"/>
</dbReference>
<dbReference type="PIR" id="A83263">
    <property type="entry name" value="A83263"/>
</dbReference>
<dbReference type="RefSeq" id="NP_251740.1">
    <property type="nucleotide sequence ID" value="NC_002516.2"/>
</dbReference>
<dbReference type="RefSeq" id="WP_003103236.1">
    <property type="nucleotide sequence ID" value="NZ_QZGE01000009.1"/>
</dbReference>
<dbReference type="SMR" id="Q9HZF8"/>
<dbReference type="FunCoup" id="Q9HZF8">
    <property type="interactions" value="666"/>
</dbReference>
<dbReference type="STRING" id="208964.PA3050"/>
<dbReference type="PaxDb" id="208964-PA3050"/>
<dbReference type="DNASU" id="882867"/>
<dbReference type="GeneID" id="882867"/>
<dbReference type="KEGG" id="pae:PA3050"/>
<dbReference type="PATRIC" id="fig|208964.12.peg.3201"/>
<dbReference type="PseudoCAP" id="PA3050"/>
<dbReference type="HOGENOM" id="CLU_013640_2_0_6"/>
<dbReference type="InParanoid" id="Q9HZF8"/>
<dbReference type="OrthoDB" id="9802377at2"/>
<dbReference type="PhylomeDB" id="Q9HZF8"/>
<dbReference type="BioCyc" id="PAER208964:G1FZ6-3103-MONOMER"/>
<dbReference type="UniPathway" id="UPA00070">
    <property type="reaction ID" value="UER00946"/>
</dbReference>
<dbReference type="Proteomes" id="UP000002438">
    <property type="component" value="Chromosome"/>
</dbReference>
<dbReference type="GO" id="GO:0005737">
    <property type="term" value="C:cytoplasm"/>
    <property type="evidence" value="ECO:0007669"/>
    <property type="project" value="InterPro"/>
</dbReference>
<dbReference type="GO" id="GO:0005886">
    <property type="term" value="C:plasma membrane"/>
    <property type="evidence" value="ECO:0007669"/>
    <property type="project" value="UniProtKB-SubCell"/>
</dbReference>
<dbReference type="GO" id="GO:0106430">
    <property type="term" value="F:dihydroorotate dehydrogenase (quinone) activity"/>
    <property type="evidence" value="ECO:0007669"/>
    <property type="project" value="UniProtKB-EC"/>
</dbReference>
<dbReference type="GO" id="GO:0004152">
    <property type="term" value="F:dihydroorotate dehydrogenase activity"/>
    <property type="evidence" value="ECO:0000318"/>
    <property type="project" value="GO_Central"/>
</dbReference>
<dbReference type="GO" id="GO:0006207">
    <property type="term" value="P:'de novo' pyrimidine nucleobase biosynthetic process"/>
    <property type="evidence" value="ECO:0000318"/>
    <property type="project" value="GO_Central"/>
</dbReference>
<dbReference type="GO" id="GO:0044205">
    <property type="term" value="P:'de novo' UMP biosynthetic process"/>
    <property type="evidence" value="ECO:0007669"/>
    <property type="project" value="UniProtKB-UniRule"/>
</dbReference>
<dbReference type="GO" id="GO:0009220">
    <property type="term" value="P:pyrimidine ribonucleotide biosynthetic process"/>
    <property type="evidence" value="ECO:0000318"/>
    <property type="project" value="GO_Central"/>
</dbReference>
<dbReference type="CDD" id="cd04738">
    <property type="entry name" value="DHOD_2_like"/>
    <property type="match status" value="1"/>
</dbReference>
<dbReference type="FunFam" id="3.20.20.70:FF:000028">
    <property type="entry name" value="Dihydroorotate dehydrogenase (quinone)"/>
    <property type="match status" value="1"/>
</dbReference>
<dbReference type="Gene3D" id="3.20.20.70">
    <property type="entry name" value="Aldolase class I"/>
    <property type="match status" value="1"/>
</dbReference>
<dbReference type="HAMAP" id="MF_00225">
    <property type="entry name" value="DHO_dh_type2"/>
    <property type="match status" value="1"/>
</dbReference>
<dbReference type="InterPro" id="IPR013785">
    <property type="entry name" value="Aldolase_TIM"/>
</dbReference>
<dbReference type="InterPro" id="IPR050074">
    <property type="entry name" value="DHO_dehydrogenase"/>
</dbReference>
<dbReference type="InterPro" id="IPR012135">
    <property type="entry name" value="Dihydroorotate_DH_1_2"/>
</dbReference>
<dbReference type="InterPro" id="IPR005719">
    <property type="entry name" value="Dihydroorotate_DH_2"/>
</dbReference>
<dbReference type="InterPro" id="IPR005720">
    <property type="entry name" value="Dihydroorotate_DH_cat"/>
</dbReference>
<dbReference type="InterPro" id="IPR001295">
    <property type="entry name" value="Dihydroorotate_DH_CS"/>
</dbReference>
<dbReference type="NCBIfam" id="NF003644">
    <property type="entry name" value="PRK05286.1-1"/>
    <property type="match status" value="1"/>
</dbReference>
<dbReference type="NCBIfam" id="NF003645">
    <property type="entry name" value="PRK05286.1-2"/>
    <property type="match status" value="1"/>
</dbReference>
<dbReference type="NCBIfam" id="NF003646">
    <property type="entry name" value="PRK05286.1-4"/>
    <property type="match status" value="1"/>
</dbReference>
<dbReference type="NCBIfam" id="NF003652">
    <property type="entry name" value="PRK05286.2-5"/>
    <property type="match status" value="1"/>
</dbReference>
<dbReference type="NCBIfam" id="TIGR01036">
    <property type="entry name" value="pyrD_sub2"/>
    <property type="match status" value="1"/>
</dbReference>
<dbReference type="PANTHER" id="PTHR48109:SF4">
    <property type="entry name" value="DIHYDROOROTATE DEHYDROGENASE (QUINONE), MITOCHONDRIAL"/>
    <property type="match status" value="1"/>
</dbReference>
<dbReference type="PANTHER" id="PTHR48109">
    <property type="entry name" value="DIHYDROOROTATE DEHYDROGENASE (QUINONE), MITOCHONDRIAL-RELATED"/>
    <property type="match status" value="1"/>
</dbReference>
<dbReference type="Pfam" id="PF01180">
    <property type="entry name" value="DHO_dh"/>
    <property type="match status" value="1"/>
</dbReference>
<dbReference type="PIRSF" id="PIRSF000164">
    <property type="entry name" value="DHO_oxidase"/>
    <property type="match status" value="1"/>
</dbReference>
<dbReference type="SUPFAM" id="SSF51395">
    <property type="entry name" value="FMN-linked oxidoreductases"/>
    <property type="match status" value="1"/>
</dbReference>
<dbReference type="PROSITE" id="PS00911">
    <property type="entry name" value="DHODEHASE_1"/>
    <property type="match status" value="1"/>
</dbReference>
<sequence length="342" mass="36129">MYTLARQLLFKLSPETSHELSIDLIGAGGRLGLNRLLTPKPASLPVSVLGLEFPNPVGLAAGLDKNGDAIDGFGQLGFGFIEIGTVTPRPQPGNPRPRLFRLPQANAIINRMGFNNHGVDHLLARVRAAKYRGVLGINIGKNFDTPVERAVDDYLICLDKVYADASYVTVNVSSPNTPGLRSLQFGDSLKQLLEALRQRQEALALRHGRRVPLAIKIAPDMTDEETALVAAALVEAGMDAVIATNTTLGREGVEGLPHGDEAGGLSGAPVREKSTHTVKVLAGELGGRLPIIAAGGITEGAHAAEKIAAGASLVQIYSGFIYKGPALIREAVDAIAALPRRN</sequence>
<proteinExistence type="inferred from homology"/>
<protein>
    <recommendedName>
        <fullName evidence="1">Dihydroorotate dehydrogenase (quinone)</fullName>
        <ecNumber evidence="1">1.3.5.2</ecNumber>
    </recommendedName>
    <alternativeName>
        <fullName evidence="1">DHOdehase</fullName>
        <shortName evidence="1">DHOD</shortName>
        <shortName evidence="1">DHODase</shortName>
    </alternativeName>
    <alternativeName>
        <fullName evidence="1">Dihydroorotate oxidase</fullName>
    </alternativeName>
</protein>
<keyword id="KW-1003">Cell membrane</keyword>
<keyword id="KW-0285">Flavoprotein</keyword>
<keyword id="KW-0288">FMN</keyword>
<keyword id="KW-0472">Membrane</keyword>
<keyword id="KW-0560">Oxidoreductase</keyword>
<keyword id="KW-0665">Pyrimidine biosynthesis</keyword>
<keyword id="KW-1185">Reference proteome</keyword>
<organism>
    <name type="scientific">Pseudomonas aeruginosa (strain ATCC 15692 / DSM 22644 / CIP 104116 / JCM 14847 / LMG 12228 / 1C / PRS 101 / PAO1)</name>
    <dbReference type="NCBI Taxonomy" id="208964"/>
    <lineage>
        <taxon>Bacteria</taxon>
        <taxon>Pseudomonadati</taxon>
        <taxon>Pseudomonadota</taxon>
        <taxon>Gammaproteobacteria</taxon>
        <taxon>Pseudomonadales</taxon>
        <taxon>Pseudomonadaceae</taxon>
        <taxon>Pseudomonas</taxon>
    </lineage>
</organism>